<organism>
    <name type="scientific">Coxiella burnetii (strain Dugway 5J108-111)</name>
    <dbReference type="NCBI Taxonomy" id="434922"/>
    <lineage>
        <taxon>Bacteria</taxon>
        <taxon>Pseudomonadati</taxon>
        <taxon>Pseudomonadota</taxon>
        <taxon>Gammaproteobacteria</taxon>
        <taxon>Legionellales</taxon>
        <taxon>Coxiellaceae</taxon>
        <taxon>Coxiella</taxon>
    </lineage>
</organism>
<feature type="chain" id="PRO_1000088543" description="Isoleucine--tRNA ligase">
    <location>
        <begin position="1"/>
        <end position="936"/>
    </location>
</feature>
<feature type="short sequence motif" description="'HIGH' region">
    <location>
        <begin position="58"/>
        <end position="68"/>
    </location>
</feature>
<feature type="short sequence motif" description="'KMSKS' region">
    <location>
        <begin position="602"/>
        <end position="606"/>
    </location>
</feature>
<feature type="binding site" evidence="1">
    <location>
        <position position="561"/>
    </location>
    <ligand>
        <name>L-isoleucyl-5'-AMP</name>
        <dbReference type="ChEBI" id="CHEBI:178002"/>
    </ligand>
</feature>
<feature type="binding site" evidence="1">
    <location>
        <position position="605"/>
    </location>
    <ligand>
        <name>ATP</name>
        <dbReference type="ChEBI" id="CHEBI:30616"/>
    </ligand>
</feature>
<feature type="binding site" evidence="1">
    <location>
        <position position="899"/>
    </location>
    <ligand>
        <name>Zn(2+)</name>
        <dbReference type="ChEBI" id="CHEBI:29105"/>
    </ligand>
</feature>
<feature type="binding site" evidence="1">
    <location>
        <position position="902"/>
    </location>
    <ligand>
        <name>Zn(2+)</name>
        <dbReference type="ChEBI" id="CHEBI:29105"/>
    </ligand>
</feature>
<feature type="binding site" evidence="1">
    <location>
        <position position="919"/>
    </location>
    <ligand>
        <name>Zn(2+)</name>
        <dbReference type="ChEBI" id="CHEBI:29105"/>
    </ligand>
</feature>
<feature type="binding site" evidence="1">
    <location>
        <position position="922"/>
    </location>
    <ligand>
        <name>Zn(2+)</name>
        <dbReference type="ChEBI" id="CHEBI:29105"/>
    </ligand>
</feature>
<dbReference type="EC" id="6.1.1.5" evidence="1"/>
<dbReference type="EMBL" id="CP000733">
    <property type="protein sequence ID" value="ABS78310.1"/>
    <property type="molecule type" value="Genomic_DNA"/>
</dbReference>
<dbReference type="RefSeq" id="WP_011997211.1">
    <property type="nucleotide sequence ID" value="NC_009727.1"/>
</dbReference>
<dbReference type="SMR" id="A9KEI8"/>
<dbReference type="KEGG" id="cbd:CBUD_1672"/>
<dbReference type="HOGENOM" id="CLU_001493_7_0_6"/>
<dbReference type="Proteomes" id="UP000008555">
    <property type="component" value="Chromosome"/>
</dbReference>
<dbReference type="GO" id="GO:0005829">
    <property type="term" value="C:cytosol"/>
    <property type="evidence" value="ECO:0007669"/>
    <property type="project" value="TreeGrafter"/>
</dbReference>
<dbReference type="GO" id="GO:0002161">
    <property type="term" value="F:aminoacyl-tRNA deacylase activity"/>
    <property type="evidence" value="ECO:0007669"/>
    <property type="project" value="InterPro"/>
</dbReference>
<dbReference type="GO" id="GO:0005524">
    <property type="term" value="F:ATP binding"/>
    <property type="evidence" value="ECO:0007669"/>
    <property type="project" value="UniProtKB-UniRule"/>
</dbReference>
<dbReference type="GO" id="GO:0004822">
    <property type="term" value="F:isoleucine-tRNA ligase activity"/>
    <property type="evidence" value="ECO:0007669"/>
    <property type="project" value="UniProtKB-UniRule"/>
</dbReference>
<dbReference type="GO" id="GO:0000049">
    <property type="term" value="F:tRNA binding"/>
    <property type="evidence" value="ECO:0007669"/>
    <property type="project" value="InterPro"/>
</dbReference>
<dbReference type="GO" id="GO:0008270">
    <property type="term" value="F:zinc ion binding"/>
    <property type="evidence" value="ECO:0007669"/>
    <property type="project" value="UniProtKB-UniRule"/>
</dbReference>
<dbReference type="GO" id="GO:0006428">
    <property type="term" value="P:isoleucyl-tRNA aminoacylation"/>
    <property type="evidence" value="ECO:0007669"/>
    <property type="project" value="UniProtKB-UniRule"/>
</dbReference>
<dbReference type="CDD" id="cd07960">
    <property type="entry name" value="Anticodon_Ia_Ile_BEm"/>
    <property type="match status" value="1"/>
</dbReference>
<dbReference type="CDD" id="cd00818">
    <property type="entry name" value="IleRS_core"/>
    <property type="match status" value="1"/>
</dbReference>
<dbReference type="FunFam" id="1.10.730.20:FF:000001">
    <property type="entry name" value="Isoleucine--tRNA ligase"/>
    <property type="match status" value="1"/>
</dbReference>
<dbReference type="FunFam" id="3.40.50.620:FF:000042">
    <property type="entry name" value="Isoleucine--tRNA ligase"/>
    <property type="match status" value="1"/>
</dbReference>
<dbReference type="FunFam" id="3.40.50.620:FF:000048">
    <property type="entry name" value="Isoleucine--tRNA ligase"/>
    <property type="match status" value="1"/>
</dbReference>
<dbReference type="FunFam" id="3.90.740.10:FF:000002">
    <property type="entry name" value="Isoleucine--tRNA ligase"/>
    <property type="match status" value="1"/>
</dbReference>
<dbReference type="Gene3D" id="1.10.730.20">
    <property type="match status" value="1"/>
</dbReference>
<dbReference type="Gene3D" id="3.40.50.620">
    <property type="entry name" value="HUPs"/>
    <property type="match status" value="2"/>
</dbReference>
<dbReference type="Gene3D" id="3.90.740.10">
    <property type="entry name" value="Valyl/Leucyl/Isoleucyl-tRNA synthetase, editing domain"/>
    <property type="match status" value="1"/>
</dbReference>
<dbReference type="HAMAP" id="MF_02002">
    <property type="entry name" value="Ile_tRNA_synth_type1"/>
    <property type="match status" value="1"/>
</dbReference>
<dbReference type="InterPro" id="IPR002300">
    <property type="entry name" value="aa-tRNA-synth_Ia"/>
</dbReference>
<dbReference type="InterPro" id="IPR033708">
    <property type="entry name" value="Anticodon_Ile_BEm"/>
</dbReference>
<dbReference type="InterPro" id="IPR002301">
    <property type="entry name" value="Ile-tRNA-ligase"/>
</dbReference>
<dbReference type="InterPro" id="IPR023585">
    <property type="entry name" value="Ile-tRNA-ligase_type1"/>
</dbReference>
<dbReference type="InterPro" id="IPR050081">
    <property type="entry name" value="Ile-tRNA_ligase"/>
</dbReference>
<dbReference type="InterPro" id="IPR013155">
    <property type="entry name" value="M/V/L/I-tRNA-synth_anticd-bd"/>
</dbReference>
<dbReference type="InterPro" id="IPR014729">
    <property type="entry name" value="Rossmann-like_a/b/a_fold"/>
</dbReference>
<dbReference type="InterPro" id="IPR009080">
    <property type="entry name" value="tRNAsynth_Ia_anticodon-bd"/>
</dbReference>
<dbReference type="InterPro" id="IPR009008">
    <property type="entry name" value="Val/Leu/Ile-tRNA-synth_edit"/>
</dbReference>
<dbReference type="InterPro" id="IPR010663">
    <property type="entry name" value="Znf_FPG/IleRS"/>
</dbReference>
<dbReference type="NCBIfam" id="TIGR00392">
    <property type="entry name" value="ileS"/>
    <property type="match status" value="1"/>
</dbReference>
<dbReference type="PANTHER" id="PTHR42765:SF1">
    <property type="entry name" value="ISOLEUCINE--TRNA LIGASE, MITOCHONDRIAL"/>
    <property type="match status" value="1"/>
</dbReference>
<dbReference type="PANTHER" id="PTHR42765">
    <property type="entry name" value="SOLEUCYL-TRNA SYNTHETASE"/>
    <property type="match status" value="1"/>
</dbReference>
<dbReference type="Pfam" id="PF08264">
    <property type="entry name" value="Anticodon_1"/>
    <property type="match status" value="1"/>
</dbReference>
<dbReference type="Pfam" id="PF00133">
    <property type="entry name" value="tRNA-synt_1"/>
    <property type="match status" value="1"/>
</dbReference>
<dbReference type="Pfam" id="PF06827">
    <property type="entry name" value="zf-FPG_IleRS"/>
    <property type="match status" value="1"/>
</dbReference>
<dbReference type="PRINTS" id="PR00984">
    <property type="entry name" value="TRNASYNTHILE"/>
</dbReference>
<dbReference type="SUPFAM" id="SSF47323">
    <property type="entry name" value="Anticodon-binding domain of a subclass of class I aminoacyl-tRNA synthetases"/>
    <property type="match status" value="1"/>
</dbReference>
<dbReference type="SUPFAM" id="SSF52374">
    <property type="entry name" value="Nucleotidylyl transferase"/>
    <property type="match status" value="1"/>
</dbReference>
<dbReference type="SUPFAM" id="SSF50677">
    <property type="entry name" value="ValRS/IleRS/LeuRS editing domain"/>
    <property type="match status" value="1"/>
</dbReference>
<sequence length="936" mass="106140">MTDYKDTLNLPQTDFPMRANLPEREPQTLARWQTLDLYRKIRKDREGQPKFILHDGPPYANGRAHLGTAFNKTLKDIVVKSKTLSGFDAPFVPGWDCHGLPIELNVEKKLGKDKLSANAFRQACRDYAFSQIELQRDDFQRLGVLGDWQHPYLTMDFGYEADTVRALAKIVANGHLLRGQKPVHWCAACGSALAEAEVEYRDKASPAVDVGFEAVDAEAVRQRFGVKNATTRVLVPIWTTTPWTLPANEAVSVHPELHYALVKSELQNQPVYLILAKDLVDSAMQRYGVDDYEVHGNLKGDALEGMQLQHPFLDRIVPIILGEHVTTEAGTGNVHTAPAHGLEDYFVAEKYNLPINNPVDARGRFIPDTFLVGGQPVFKANEPIIVLLADSGHLLHSETIQHSYPHCWRHKTPLIFRTTPQWFIGMNKNGLRERALAEIEKVTWLPAWGEARIGKMVADRPDWCISRQRLWGIPIPLFIHKKSGELHPKSPALMEKVAQLIEKESVDAWFDLDPKVLLGDDADHYEKVTDVLDVWFDSGVTHFCVLEKRRELKVPADIYLEGSDQHRGWFQSSLLTSLAIRDKAPYKSVLTYGFVVDSQGRKMSKSLGNVILPADVVKNLGADVLRLWAASMDYTVEVNVSDEILKRASDAYRRIRNTARFLLSNLYDFDPKKDKVAVDQLVALDRWAIFTTQKLQEKIITAYDRYRFPAIYQAIHNFCTVEMGSFYLDIIKDRLYTSKESGLPRRSAQTALYYIAEAFVRWIAPIISFTADEIWQFMPGDREPSVFLTQWFSDFPNAALSGEEEQRWQLLLQIRDEVNKALETYRNEGKIGSALAAEVVLYADERLNAAIATLGEELRFVLITSEASVLPFNEKSKAAFDTALPGLALEINVSEFEKCARCWQRRSSVGQIKEHADLCDRCVSNAFEDGEMRQFA</sequence>
<evidence type="ECO:0000255" key="1">
    <source>
        <dbReference type="HAMAP-Rule" id="MF_02002"/>
    </source>
</evidence>
<comment type="function">
    <text evidence="1">Catalyzes the attachment of isoleucine to tRNA(Ile). As IleRS can inadvertently accommodate and process structurally similar amino acids such as valine, to avoid such errors it has two additional distinct tRNA(Ile)-dependent editing activities. One activity is designated as 'pretransfer' editing and involves the hydrolysis of activated Val-AMP. The other activity is designated 'posttransfer' editing and involves deacylation of mischarged Val-tRNA(Ile).</text>
</comment>
<comment type="catalytic activity">
    <reaction evidence="1">
        <text>tRNA(Ile) + L-isoleucine + ATP = L-isoleucyl-tRNA(Ile) + AMP + diphosphate</text>
        <dbReference type="Rhea" id="RHEA:11060"/>
        <dbReference type="Rhea" id="RHEA-COMP:9666"/>
        <dbReference type="Rhea" id="RHEA-COMP:9695"/>
        <dbReference type="ChEBI" id="CHEBI:30616"/>
        <dbReference type="ChEBI" id="CHEBI:33019"/>
        <dbReference type="ChEBI" id="CHEBI:58045"/>
        <dbReference type="ChEBI" id="CHEBI:78442"/>
        <dbReference type="ChEBI" id="CHEBI:78528"/>
        <dbReference type="ChEBI" id="CHEBI:456215"/>
        <dbReference type="EC" id="6.1.1.5"/>
    </reaction>
</comment>
<comment type="cofactor">
    <cofactor evidence="1">
        <name>Zn(2+)</name>
        <dbReference type="ChEBI" id="CHEBI:29105"/>
    </cofactor>
    <text evidence="1">Binds 1 zinc ion per subunit.</text>
</comment>
<comment type="subunit">
    <text evidence="1">Monomer.</text>
</comment>
<comment type="subcellular location">
    <subcellularLocation>
        <location evidence="1">Cytoplasm</location>
    </subcellularLocation>
</comment>
<comment type="domain">
    <text evidence="1">IleRS has two distinct active sites: one for aminoacylation and one for editing. The misactivated valine is translocated from the active site to the editing site, which sterically excludes the correctly activated isoleucine. The single editing site contains two valyl binding pockets, one specific for each substrate (Val-AMP or Val-tRNA(Ile)).</text>
</comment>
<comment type="similarity">
    <text evidence="1">Belongs to the class-I aminoacyl-tRNA synthetase family. IleS type 1 subfamily.</text>
</comment>
<proteinExistence type="inferred from homology"/>
<protein>
    <recommendedName>
        <fullName evidence="1">Isoleucine--tRNA ligase</fullName>
        <ecNumber evidence="1">6.1.1.5</ecNumber>
    </recommendedName>
    <alternativeName>
        <fullName evidence="1">Isoleucyl-tRNA synthetase</fullName>
        <shortName evidence="1">IleRS</shortName>
    </alternativeName>
</protein>
<name>SYI_COXBN</name>
<reference key="1">
    <citation type="journal article" date="2009" name="Infect. Immun.">
        <title>Comparative genomics reveal extensive transposon-mediated genomic plasticity and diversity among potential effector proteins within the genus Coxiella.</title>
        <authorList>
            <person name="Beare P.A."/>
            <person name="Unsworth N."/>
            <person name="Andoh M."/>
            <person name="Voth D.E."/>
            <person name="Omsland A."/>
            <person name="Gilk S.D."/>
            <person name="Williams K.P."/>
            <person name="Sobral B.W."/>
            <person name="Kupko J.J. III"/>
            <person name="Porcella S.F."/>
            <person name="Samuel J.E."/>
            <person name="Heinzen R.A."/>
        </authorList>
    </citation>
    <scope>NUCLEOTIDE SEQUENCE [LARGE SCALE GENOMIC DNA]</scope>
    <source>
        <strain>Dugway 5J108-111</strain>
    </source>
</reference>
<accession>A9KEI8</accession>
<gene>
    <name evidence="1" type="primary">ileS</name>
    <name type="ordered locus">CBUD_1672</name>
</gene>
<keyword id="KW-0030">Aminoacyl-tRNA synthetase</keyword>
<keyword id="KW-0067">ATP-binding</keyword>
<keyword id="KW-0963">Cytoplasm</keyword>
<keyword id="KW-0436">Ligase</keyword>
<keyword id="KW-0479">Metal-binding</keyword>
<keyword id="KW-0547">Nucleotide-binding</keyword>
<keyword id="KW-0648">Protein biosynthesis</keyword>
<keyword id="KW-0862">Zinc</keyword>